<dbReference type="EMBL" id="OP716691">
    <property type="protein sequence ID" value="WAB46481.1"/>
    <property type="molecule type" value="mRNA"/>
</dbReference>
<dbReference type="GO" id="GO:0005576">
    <property type="term" value="C:extracellular region"/>
    <property type="evidence" value="ECO:0007669"/>
    <property type="project" value="UniProtKB-KW"/>
</dbReference>
<dbReference type="GO" id="GO:0009277">
    <property type="term" value="C:fungal-type cell wall"/>
    <property type="evidence" value="ECO:0007669"/>
    <property type="project" value="InterPro"/>
</dbReference>
<dbReference type="GO" id="GO:0005199">
    <property type="term" value="F:structural constituent of cell wall"/>
    <property type="evidence" value="ECO:0007669"/>
    <property type="project" value="InterPro"/>
</dbReference>
<dbReference type="CDD" id="cd23507">
    <property type="entry name" value="hydrophobin_I"/>
    <property type="match status" value="1"/>
</dbReference>
<dbReference type="InterPro" id="IPR001338">
    <property type="entry name" value="Hydrophobin"/>
</dbReference>
<dbReference type="Pfam" id="PF01185">
    <property type="entry name" value="Hydrophobin"/>
    <property type="match status" value="1"/>
</dbReference>
<dbReference type="SMART" id="SM00075">
    <property type="entry name" value="HYDRO"/>
    <property type="match status" value="1"/>
</dbReference>
<name>HYD1_GANLU</name>
<evidence type="ECO:0000250" key="1">
    <source>
        <dbReference type="UniProtKB" id="D8QCG9"/>
    </source>
</evidence>
<evidence type="ECO:0000250" key="2">
    <source>
        <dbReference type="UniProtKB" id="P16933"/>
    </source>
</evidence>
<evidence type="ECO:0000255" key="3"/>
<evidence type="ECO:0000255" key="4">
    <source>
        <dbReference type="PROSITE-ProRule" id="PRU00498"/>
    </source>
</evidence>
<evidence type="ECO:0000269" key="5">
    <source>
    </source>
</evidence>
<evidence type="ECO:0000303" key="6">
    <source>
    </source>
</evidence>
<evidence type="ECO:0000305" key="7"/>
<protein>
    <recommendedName>
        <fullName evidence="6">Class I hydrophobin 1</fullName>
    </recommendedName>
</protein>
<proteinExistence type="evidence at transcript level"/>
<accession>A0A9E8S4N7</accession>
<reference key="1">
    <citation type="journal article" date="2023" name="FEMS Microbiol. Lett.">
        <title>Function of a hydrophobin in growth and development, nitrogen regulation, and abiotic stress resistance of Ganoderma lucidum.</title>
        <authorList>
            <person name="Qiao J."/>
            <person name="Liu H."/>
            <person name="Xue P."/>
            <person name="Hong M."/>
            <person name="Guo X."/>
            <person name="Xing Z."/>
            <person name="Zhao M."/>
            <person name="Zhu J."/>
        </authorList>
    </citation>
    <scope>NUCLEOTIDE SEQUENCE [MRNA]</scope>
    <scope>DEVELOPMENTAL STAGE</scope>
    <scope>INDUCTION</scope>
    <scope>DISRUPTION PHENOTYPE</scope>
    <scope>FUNCTION</scope>
</reference>
<organism>
    <name type="scientific">Ganoderma lucidum</name>
    <name type="common">Ling zhi medicinal fungus</name>
    <name type="synonym">Bracket fungus</name>
    <dbReference type="NCBI Taxonomy" id="5315"/>
    <lineage>
        <taxon>Eukaryota</taxon>
        <taxon>Fungi</taxon>
        <taxon>Dikarya</taxon>
        <taxon>Basidiomycota</taxon>
        <taxon>Agaricomycotina</taxon>
        <taxon>Agaricomycetes</taxon>
        <taxon>Polyporales</taxon>
        <taxon>Polyporaceae</taxon>
        <taxon>Ganoderma</taxon>
    </lineage>
</organism>
<feature type="signal peptide" evidence="3">
    <location>
        <begin position="1"/>
        <end position="19"/>
    </location>
</feature>
<feature type="chain" id="PRO_5039745362" description="Class I hydrophobin 1">
    <location>
        <begin position="20"/>
        <end position="145"/>
    </location>
</feature>
<feature type="glycosylation site" description="N-linked (GlcNAc...) asparagine" evidence="4">
    <location>
        <position position="80"/>
    </location>
</feature>
<feature type="glycosylation site" description="N-linked (GlcNAc...) asparagine" evidence="4">
    <location>
        <position position="129"/>
    </location>
</feature>
<feature type="disulfide bond" evidence="1">
    <location>
        <begin position="65"/>
        <end position="126"/>
    </location>
</feature>
<feature type="disulfide bond" evidence="1">
    <location>
        <begin position="72"/>
        <end position="120"/>
    </location>
</feature>
<feature type="disulfide bond" evidence="1">
    <location>
        <begin position="73"/>
        <end position="106"/>
    </location>
</feature>
<feature type="disulfide bond" evidence="1">
    <location>
        <begin position="127"/>
        <end position="140"/>
    </location>
</feature>
<keyword id="KW-0134">Cell wall</keyword>
<keyword id="KW-1015">Disulfide bond</keyword>
<keyword id="KW-0325">Glycoprotein</keyword>
<keyword id="KW-0964">Secreted</keyword>
<keyword id="KW-0732">Signal</keyword>
<comment type="function">
    <text evidence="5 7">Aerial growth, conidiation, and dispersal of filamentous fungi in the environment rely upon a capability of their secreting small amphipathic proteins called hydrophobins (HPBs) with low sequence identity. Class I can self-assemble into an outermost layer of rodlet bundles on aerial cell surfaces, conferring cellular hydrophobicity that supports fungal growth, development and dispersal; whereas Class II form highly ordered films at water-air interfaces through intermolecular interactions but contribute nothing to the rodlet structure (Probable). Hyd1 is a class I hydrophobin that is crucial for the initiation of primordia formation (PubMed:37296219). Plays also important roles in nitrogen regulation and resistance to abiotic stresses (PubMed:37296219).</text>
</comment>
<comment type="subunit">
    <text evidence="2">Self-assembles to form functional amyloid fibrils called rodlets. Self-assembly into fibrillar rodlets occurs spontaneously at hydrophobic:hydrophilic interfaces and the rodlets further associate laterally to form amphipathic monolayers.</text>
</comment>
<comment type="subcellular location">
    <subcellularLocation>
        <location evidence="2">Secreted</location>
    </subcellularLocation>
    <subcellularLocation>
        <location evidence="2">Secreted</location>
        <location evidence="2">Cell wall</location>
    </subcellularLocation>
</comment>
<comment type="developmental stage">
    <text evidence="5">Highly expressed during the formation of primordia, and expression is the lowest in fruiting bodies.</text>
</comment>
<comment type="induction">
    <text evidence="5">Expression is negatively regulated by areA, an important transcription factor in nitrogen metabolism that contains a GATA zinc finger-binding domain.</text>
</comment>
<comment type="disruption phenotype">
    <text evidence="5">Impairs the formation of primordia (PubMed:37296219). Inhibits the mycelial growth on various nitrogen sources (PubMed:37296219). Affects the resistance to heat, oxidative, and osmotic stresses (PubMed:37296219).</text>
</comment>
<comment type="similarity">
    <text evidence="7">Belongs to the fungal hydrophobin family.</text>
</comment>
<gene>
    <name evidence="6" type="primary">hyd1</name>
</gene>
<sequence>MKFSYAIAAVVAAAASVQAVETNGQRMARGLKPLPPRNIHRRASRTNEARGATPSGTPSGGDYNCNTGSVQCCNQVSKANDTVISAILGLLGIGGVADDVLVGLKCSPLSVVGLGSGNSCSQRPVCCENNSKGGLVSIGCIPITL</sequence>